<feature type="chain" id="PRO_1000165521" description="Small ribosomal subunit protein uS3">
    <location>
        <begin position="1"/>
        <end position="233"/>
    </location>
</feature>
<feature type="domain" description="KH type-2" evidence="1">
    <location>
        <begin position="39"/>
        <end position="107"/>
    </location>
</feature>
<name>RS3_VIBCM</name>
<gene>
    <name evidence="1" type="primary">rpsC</name>
    <name type="ordered locus">VCM66_2510</name>
</gene>
<evidence type="ECO:0000255" key="1">
    <source>
        <dbReference type="HAMAP-Rule" id="MF_01309"/>
    </source>
</evidence>
<evidence type="ECO:0000305" key="2"/>
<organism>
    <name type="scientific">Vibrio cholerae serotype O1 (strain M66-2)</name>
    <dbReference type="NCBI Taxonomy" id="579112"/>
    <lineage>
        <taxon>Bacteria</taxon>
        <taxon>Pseudomonadati</taxon>
        <taxon>Pseudomonadota</taxon>
        <taxon>Gammaproteobacteria</taxon>
        <taxon>Vibrionales</taxon>
        <taxon>Vibrionaceae</taxon>
        <taxon>Vibrio</taxon>
    </lineage>
</organism>
<reference key="1">
    <citation type="journal article" date="2008" name="PLoS ONE">
        <title>A recalibrated molecular clock and independent origins for the cholera pandemic clones.</title>
        <authorList>
            <person name="Feng L."/>
            <person name="Reeves P.R."/>
            <person name="Lan R."/>
            <person name="Ren Y."/>
            <person name="Gao C."/>
            <person name="Zhou Z."/>
            <person name="Ren Y."/>
            <person name="Cheng J."/>
            <person name="Wang W."/>
            <person name="Wang J."/>
            <person name="Qian W."/>
            <person name="Li D."/>
            <person name="Wang L."/>
        </authorList>
    </citation>
    <scope>NUCLEOTIDE SEQUENCE [LARGE SCALE GENOMIC DNA]</scope>
    <source>
        <strain>M66-2</strain>
    </source>
</reference>
<proteinExistence type="inferred from homology"/>
<keyword id="KW-0687">Ribonucleoprotein</keyword>
<keyword id="KW-0689">Ribosomal protein</keyword>
<keyword id="KW-0694">RNA-binding</keyword>
<keyword id="KW-0699">rRNA-binding</keyword>
<comment type="function">
    <text evidence="1">Binds the lower part of the 30S subunit head. Binds mRNA in the 70S ribosome, positioning it for translation.</text>
</comment>
<comment type="subunit">
    <text evidence="1">Part of the 30S ribosomal subunit. Forms a tight complex with proteins S10 and S14.</text>
</comment>
<comment type="similarity">
    <text evidence="1">Belongs to the universal ribosomal protein uS3 family.</text>
</comment>
<protein>
    <recommendedName>
        <fullName evidence="1">Small ribosomal subunit protein uS3</fullName>
    </recommendedName>
    <alternativeName>
        <fullName evidence="2">30S ribosomal protein S3</fullName>
    </alternativeName>
</protein>
<accession>C3LRQ2</accession>
<sequence length="233" mass="25612">MGQKVHPNGIRLGIVKPWNATWFANTKDFADNLDGDFKVRQYLSKELANASLSRIVIERPAKSIRVTIHTARPGVVIGKKGEDVEKLRAAVAKIAGVPAQINIAEVRKPELDGQLVADSIASQLERRVMFRRAMKRAVQNAMRLGAKGIKVEVSGRLGGAEIARSEWYREGRVPLHTLRADIDYATSSAHTTYGVIGVKVWIFKGEILGGMPAATEAAEPKADKPKKQRKGRK</sequence>
<dbReference type="EMBL" id="CP001233">
    <property type="protein sequence ID" value="ACP06807.1"/>
    <property type="molecule type" value="Genomic_DNA"/>
</dbReference>
<dbReference type="RefSeq" id="WP_000529940.1">
    <property type="nucleotide sequence ID" value="NC_012578.1"/>
</dbReference>
<dbReference type="SMR" id="C3LRQ2"/>
<dbReference type="GeneID" id="93953123"/>
<dbReference type="KEGG" id="vcm:VCM66_2510"/>
<dbReference type="HOGENOM" id="CLU_058591_0_2_6"/>
<dbReference type="Proteomes" id="UP000001217">
    <property type="component" value="Chromosome I"/>
</dbReference>
<dbReference type="GO" id="GO:0022627">
    <property type="term" value="C:cytosolic small ribosomal subunit"/>
    <property type="evidence" value="ECO:0007669"/>
    <property type="project" value="TreeGrafter"/>
</dbReference>
<dbReference type="GO" id="GO:0003729">
    <property type="term" value="F:mRNA binding"/>
    <property type="evidence" value="ECO:0007669"/>
    <property type="project" value="UniProtKB-UniRule"/>
</dbReference>
<dbReference type="GO" id="GO:0019843">
    <property type="term" value="F:rRNA binding"/>
    <property type="evidence" value="ECO:0007669"/>
    <property type="project" value="UniProtKB-UniRule"/>
</dbReference>
<dbReference type="GO" id="GO:0003735">
    <property type="term" value="F:structural constituent of ribosome"/>
    <property type="evidence" value="ECO:0007669"/>
    <property type="project" value="InterPro"/>
</dbReference>
<dbReference type="GO" id="GO:0006412">
    <property type="term" value="P:translation"/>
    <property type="evidence" value="ECO:0007669"/>
    <property type="project" value="UniProtKB-UniRule"/>
</dbReference>
<dbReference type="CDD" id="cd02412">
    <property type="entry name" value="KH-II_30S_S3"/>
    <property type="match status" value="1"/>
</dbReference>
<dbReference type="FunFam" id="3.30.1140.32:FF:000001">
    <property type="entry name" value="30S ribosomal protein S3"/>
    <property type="match status" value="1"/>
</dbReference>
<dbReference type="FunFam" id="3.30.300.20:FF:000001">
    <property type="entry name" value="30S ribosomal protein S3"/>
    <property type="match status" value="1"/>
</dbReference>
<dbReference type="Gene3D" id="3.30.300.20">
    <property type="match status" value="1"/>
</dbReference>
<dbReference type="Gene3D" id="3.30.1140.32">
    <property type="entry name" value="Ribosomal protein S3, C-terminal domain"/>
    <property type="match status" value="1"/>
</dbReference>
<dbReference type="HAMAP" id="MF_01309_B">
    <property type="entry name" value="Ribosomal_uS3_B"/>
    <property type="match status" value="1"/>
</dbReference>
<dbReference type="InterPro" id="IPR004087">
    <property type="entry name" value="KH_dom"/>
</dbReference>
<dbReference type="InterPro" id="IPR015946">
    <property type="entry name" value="KH_dom-like_a/b"/>
</dbReference>
<dbReference type="InterPro" id="IPR004044">
    <property type="entry name" value="KH_dom_type_2"/>
</dbReference>
<dbReference type="InterPro" id="IPR009019">
    <property type="entry name" value="KH_sf_prok-type"/>
</dbReference>
<dbReference type="InterPro" id="IPR036419">
    <property type="entry name" value="Ribosomal_S3_C_sf"/>
</dbReference>
<dbReference type="InterPro" id="IPR005704">
    <property type="entry name" value="Ribosomal_uS3_bac-typ"/>
</dbReference>
<dbReference type="InterPro" id="IPR001351">
    <property type="entry name" value="Ribosomal_uS3_C"/>
</dbReference>
<dbReference type="InterPro" id="IPR018280">
    <property type="entry name" value="Ribosomal_uS3_CS"/>
</dbReference>
<dbReference type="NCBIfam" id="TIGR01009">
    <property type="entry name" value="rpsC_bact"/>
    <property type="match status" value="1"/>
</dbReference>
<dbReference type="PANTHER" id="PTHR11760">
    <property type="entry name" value="30S/40S RIBOSOMAL PROTEIN S3"/>
    <property type="match status" value="1"/>
</dbReference>
<dbReference type="PANTHER" id="PTHR11760:SF19">
    <property type="entry name" value="SMALL RIBOSOMAL SUBUNIT PROTEIN US3C"/>
    <property type="match status" value="1"/>
</dbReference>
<dbReference type="Pfam" id="PF07650">
    <property type="entry name" value="KH_2"/>
    <property type="match status" value="1"/>
</dbReference>
<dbReference type="Pfam" id="PF00189">
    <property type="entry name" value="Ribosomal_S3_C"/>
    <property type="match status" value="1"/>
</dbReference>
<dbReference type="SMART" id="SM00322">
    <property type="entry name" value="KH"/>
    <property type="match status" value="1"/>
</dbReference>
<dbReference type="SUPFAM" id="SSF54814">
    <property type="entry name" value="Prokaryotic type KH domain (KH-domain type II)"/>
    <property type="match status" value="1"/>
</dbReference>
<dbReference type="SUPFAM" id="SSF54821">
    <property type="entry name" value="Ribosomal protein S3 C-terminal domain"/>
    <property type="match status" value="1"/>
</dbReference>
<dbReference type="PROSITE" id="PS50823">
    <property type="entry name" value="KH_TYPE_2"/>
    <property type="match status" value="1"/>
</dbReference>
<dbReference type="PROSITE" id="PS00548">
    <property type="entry name" value="RIBOSOMAL_S3"/>
    <property type="match status" value="1"/>
</dbReference>